<comment type="function">
    <text evidence="1">This protein binds specifically to 23S rRNA; its binding is stimulated by other ribosomal proteins, e.g. L4, L17, and L20. It is important during the early stages of 50S assembly. It makes multiple contacts with different domains of the 23S rRNA in the assembled 50S subunit and ribosome (By similarity).</text>
</comment>
<comment type="function">
    <text evidence="1">The globular domain of the protein is located near the polypeptide exit tunnel on the outside of the subunit, while an extended beta-hairpin is found that lines the wall of the exit tunnel in the center of the 70S ribosome.</text>
</comment>
<comment type="subunit">
    <text evidence="1">Part of the 50S ribosomal subunit.</text>
</comment>
<comment type="similarity">
    <text evidence="1">Belongs to the universal ribosomal protein uL22 family.</text>
</comment>
<protein>
    <recommendedName>
        <fullName evidence="1">Large ribosomal subunit protein uL22</fullName>
    </recommendedName>
    <alternativeName>
        <fullName evidence="3">50S ribosomal protein L22</fullName>
    </alternativeName>
</protein>
<evidence type="ECO:0000255" key="1">
    <source>
        <dbReference type="HAMAP-Rule" id="MF_01331"/>
    </source>
</evidence>
<evidence type="ECO:0000256" key="2">
    <source>
        <dbReference type="SAM" id="MobiDB-lite"/>
    </source>
</evidence>
<evidence type="ECO:0000305" key="3"/>
<organism>
    <name type="scientific">Mycoplasma genitalium (strain ATCC 33530 / DSM 19775 / NCTC 10195 / G37)</name>
    <name type="common">Mycoplasmoides genitalium</name>
    <dbReference type="NCBI Taxonomy" id="243273"/>
    <lineage>
        <taxon>Bacteria</taxon>
        <taxon>Bacillati</taxon>
        <taxon>Mycoplasmatota</taxon>
        <taxon>Mycoplasmoidales</taxon>
        <taxon>Mycoplasmoidaceae</taxon>
        <taxon>Mycoplasmoides</taxon>
    </lineage>
</organism>
<dbReference type="EMBL" id="L43967">
    <property type="protein sequence ID" value="AAC71374.1"/>
    <property type="molecule type" value="Genomic_DNA"/>
</dbReference>
<dbReference type="PIR" id="C64217">
    <property type="entry name" value="C64217"/>
</dbReference>
<dbReference type="RefSeq" id="WP_009885840.1">
    <property type="nucleotide sequence ID" value="NC_000908.2"/>
</dbReference>
<dbReference type="SMR" id="P47402"/>
<dbReference type="FunCoup" id="P47402">
    <property type="interactions" value="197"/>
</dbReference>
<dbReference type="STRING" id="243273.MG_156"/>
<dbReference type="GeneID" id="88282289"/>
<dbReference type="KEGG" id="mge:MG_156"/>
<dbReference type="eggNOG" id="COG0091">
    <property type="taxonomic scope" value="Bacteria"/>
</dbReference>
<dbReference type="HOGENOM" id="CLU_083987_3_3_14"/>
<dbReference type="InParanoid" id="P47402"/>
<dbReference type="OrthoDB" id="9805969at2"/>
<dbReference type="BioCyc" id="MGEN243273:G1GJ2-180-MONOMER"/>
<dbReference type="Proteomes" id="UP000000807">
    <property type="component" value="Chromosome"/>
</dbReference>
<dbReference type="GO" id="GO:0022625">
    <property type="term" value="C:cytosolic large ribosomal subunit"/>
    <property type="evidence" value="ECO:0000318"/>
    <property type="project" value="GO_Central"/>
</dbReference>
<dbReference type="GO" id="GO:0019843">
    <property type="term" value="F:rRNA binding"/>
    <property type="evidence" value="ECO:0007669"/>
    <property type="project" value="UniProtKB-UniRule"/>
</dbReference>
<dbReference type="GO" id="GO:0003735">
    <property type="term" value="F:structural constituent of ribosome"/>
    <property type="evidence" value="ECO:0000318"/>
    <property type="project" value="GO_Central"/>
</dbReference>
<dbReference type="GO" id="GO:0006412">
    <property type="term" value="P:translation"/>
    <property type="evidence" value="ECO:0000318"/>
    <property type="project" value="GO_Central"/>
</dbReference>
<dbReference type="CDD" id="cd00336">
    <property type="entry name" value="Ribosomal_L22"/>
    <property type="match status" value="1"/>
</dbReference>
<dbReference type="Gene3D" id="3.90.470.10">
    <property type="entry name" value="Ribosomal protein L22/L17"/>
    <property type="match status" value="1"/>
</dbReference>
<dbReference type="HAMAP" id="MF_01331_B">
    <property type="entry name" value="Ribosomal_uL22_B"/>
    <property type="match status" value="1"/>
</dbReference>
<dbReference type="InterPro" id="IPR001063">
    <property type="entry name" value="Ribosomal_uL22"/>
</dbReference>
<dbReference type="InterPro" id="IPR005727">
    <property type="entry name" value="Ribosomal_uL22_bac/chlpt-type"/>
</dbReference>
<dbReference type="InterPro" id="IPR047867">
    <property type="entry name" value="Ribosomal_uL22_bac/org-type"/>
</dbReference>
<dbReference type="InterPro" id="IPR018260">
    <property type="entry name" value="Ribosomal_uL22_CS"/>
</dbReference>
<dbReference type="InterPro" id="IPR036394">
    <property type="entry name" value="Ribosomal_uL22_sf"/>
</dbReference>
<dbReference type="NCBIfam" id="TIGR01044">
    <property type="entry name" value="rplV_bact"/>
    <property type="match status" value="1"/>
</dbReference>
<dbReference type="PANTHER" id="PTHR13501">
    <property type="entry name" value="CHLOROPLAST 50S RIBOSOMAL PROTEIN L22-RELATED"/>
    <property type="match status" value="1"/>
</dbReference>
<dbReference type="PANTHER" id="PTHR13501:SF8">
    <property type="entry name" value="LARGE RIBOSOMAL SUBUNIT PROTEIN UL22M"/>
    <property type="match status" value="1"/>
</dbReference>
<dbReference type="Pfam" id="PF00237">
    <property type="entry name" value="Ribosomal_L22"/>
    <property type="match status" value="1"/>
</dbReference>
<dbReference type="SUPFAM" id="SSF54843">
    <property type="entry name" value="Ribosomal protein L22"/>
    <property type="match status" value="1"/>
</dbReference>
<dbReference type="PROSITE" id="PS00464">
    <property type="entry name" value="RIBOSOMAL_L22"/>
    <property type="match status" value="1"/>
</dbReference>
<feature type="chain" id="PRO_0000125177" description="Large ribosomal subunit protein uL22">
    <location>
        <begin position="1"/>
        <end position="144"/>
    </location>
</feature>
<feature type="region of interest" description="Disordered" evidence="2">
    <location>
        <begin position="123"/>
        <end position="144"/>
    </location>
</feature>
<feature type="compositionally biased region" description="Basic residues" evidence="2">
    <location>
        <begin position="125"/>
        <end position="144"/>
    </location>
</feature>
<keyword id="KW-1185">Reference proteome</keyword>
<keyword id="KW-0687">Ribonucleoprotein</keyword>
<keyword id="KW-0689">Ribosomal protein</keyword>
<keyword id="KW-0694">RNA-binding</keyword>
<keyword id="KW-0699">rRNA-binding</keyword>
<name>RL22_MYCGE</name>
<gene>
    <name evidence="1" type="primary">rplV</name>
    <name evidence="1" type="synonym">rpl22</name>
    <name type="ordered locus">MG156</name>
</gene>
<accession>P47402</accession>
<sequence length="144" mass="16131">MIAFAKQYRVHISPQKARLVCQLIVGKKINDAQNILLNTPKKAAYFLTKLLNSAISNATNNHGMSGDLLYVFECVANQGPSMKRTIARAKGSGSVLTKRSSNLVIKLSDNPNERKLLLTQQKELVKKRTMGHKKEKAKQKQKQQ</sequence>
<proteinExistence type="inferred from homology"/>
<reference key="1">
    <citation type="journal article" date="1995" name="Science">
        <title>The minimal gene complement of Mycoplasma genitalium.</title>
        <authorList>
            <person name="Fraser C.M."/>
            <person name="Gocayne J.D."/>
            <person name="White O."/>
            <person name="Adams M.D."/>
            <person name="Clayton R.A."/>
            <person name="Fleischmann R.D."/>
            <person name="Bult C.J."/>
            <person name="Kerlavage A.R."/>
            <person name="Sutton G.G."/>
            <person name="Kelley J.M."/>
            <person name="Fritchman J.L."/>
            <person name="Weidman J.F."/>
            <person name="Small K.V."/>
            <person name="Sandusky M."/>
            <person name="Fuhrmann J.L."/>
            <person name="Nguyen D.T."/>
            <person name="Utterback T.R."/>
            <person name="Saudek D.M."/>
            <person name="Phillips C.A."/>
            <person name="Merrick J.M."/>
            <person name="Tomb J.-F."/>
            <person name="Dougherty B.A."/>
            <person name="Bott K.F."/>
            <person name="Hu P.-C."/>
            <person name="Lucier T.S."/>
            <person name="Peterson S.N."/>
            <person name="Smith H.O."/>
            <person name="Hutchison C.A. III"/>
            <person name="Venter J.C."/>
        </authorList>
    </citation>
    <scope>NUCLEOTIDE SEQUENCE [LARGE SCALE GENOMIC DNA]</scope>
    <source>
        <strain>ATCC 33530 / DSM 19775 / NCTC 10195 / G37</strain>
    </source>
</reference>